<organism>
    <name type="scientific">Escherichia coli (strain K12)</name>
    <dbReference type="NCBI Taxonomy" id="83333"/>
    <lineage>
        <taxon>Bacteria</taxon>
        <taxon>Pseudomonadati</taxon>
        <taxon>Pseudomonadota</taxon>
        <taxon>Gammaproteobacteria</taxon>
        <taxon>Enterobacterales</taxon>
        <taxon>Enterobacteriaceae</taxon>
        <taxon>Escherichia</taxon>
    </lineage>
</organism>
<feature type="chain" id="PRO_0000169504" description="Uncharacterized protein YrdB">
    <location>
        <begin position="1"/>
        <end position="85"/>
    </location>
</feature>
<proteinExistence type="predicted"/>
<name>YRDB_ECOLI</name>
<reference key="1">
    <citation type="journal article" date="1997" name="Science">
        <title>The complete genome sequence of Escherichia coli K-12.</title>
        <authorList>
            <person name="Blattner F.R."/>
            <person name="Plunkett G. III"/>
            <person name="Bloch C.A."/>
            <person name="Perna N.T."/>
            <person name="Burland V."/>
            <person name="Riley M."/>
            <person name="Collado-Vides J."/>
            <person name="Glasner J.D."/>
            <person name="Rode C.K."/>
            <person name="Mayhew G.F."/>
            <person name="Gregor J."/>
            <person name="Davis N.W."/>
            <person name="Kirkpatrick H.A."/>
            <person name="Goeden M.A."/>
            <person name="Rose D.J."/>
            <person name="Mau B."/>
            <person name="Shao Y."/>
        </authorList>
    </citation>
    <scope>NUCLEOTIDE SEQUENCE [LARGE SCALE GENOMIC DNA]</scope>
    <source>
        <strain>K12 / MG1655 / ATCC 47076</strain>
    </source>
</reference>
<reference key="2">
    <citation type="journal article" date="2006" name="Mol. Syst. Biol.">
        <title>Highly accurate genome sequences of Escherichia coli K-12 strains MG1655 and W3110.</title>
        <authorList>
            <person name="Hayashi K."/>
            <person name="Morooka N."/>
            <person name="Yamamoto Y."/>
            <person name="Fujita K."/>
            <person name="Isono K."/>
            <person name="Choi S."/>
            <person name="Ohtsubo E."/>
            <person name="Baba T."/>
            <person name="Wanner B.L."/>
            <person name="Mori H."/>
            <person name="Horiuchi T."/>
        </authorList>
    </citation>
    <scope>NUCLEOTIDE SEQUENCE [LARGE SCALE GENOMIC DNA]</scope>
    <source>
        <strain>K12 / W3110 / ATCC 27325 / DSM 5911</strain>
    </source>
</reference>
<sequence length="85" mass="10007">MNQAIQFPDREEWDENKKCVCFPALVNGMQLTCAISGESLAYRFTGDTPEQWLASFRQHRWDLEEEAENLIQEQSEDDQGWVWLP</sequence>
<dbReference type="EMBL" id="U18997">
    <property type="protein sequence ID" value="AAA58077.1"/>
    <property type="molecule type" value="Genomic_DNA"/>
</dbReference>
<dbReference type="EMBL" id="U00096">
    <property type="protein sequence ID" value="AAC76305.1"/>
    <property type="molecule type" value="Genomic_DNA"/>
</dbReference>
<dbReference type="EMBL" id="AP009048">
    <property type="protein sequence ID" value="BAE78011.1"/>
    <property type="molecule type" value="Genomic_DNA"/>
</dbReference>
<dbReference type="PIR" id="C65120">
    <property type="entry name" value="C65120"/>
</dbReference>
<dbReference type="RefSeq" id="NP_417739.1">
    <property type="nucleotide sequence ID" value="NC_000913.3"/>
</dbReference>
<dbReference type="RefSeq" id="WP_001070563.1">
    <property type="nucleotide sequence ID" value="NZ_STEB01000038.1"/>
</dbReference>
<dbReference type="SMR" id="P45795"/>
<dbReference type="BioGRID" id="4259564">
    <property type="interactions" value="52"/>
</dbReference>
<dbReference type="FunCoup" id="P45795">
    <property type="interactions" value="151"/>
</dbReference>
<dbReference type="STRING" id="511145.b3280"/>
<dbReference type="jPOST" id="P45795"/>
<dbReference type="PaxDb" id="511145-b3280"/>
<dbReference type="EnsemblBacteria" id="AAC76305">
    <property type="protein sequence ID" value="AAC76305"/>
    <property type="gene ID" value="b3280"/>
</dbReference>
<dbReference type="GeneID" id="947774"/>
<dbReference type="KEGG" id="ecj:JW3241"/>
<dbReference type="KEGG" id="eco:b3280"/>
<dbReference type="KEGG" id="ecoc:C3026_17840"/>
<dbReference type="PATRIC" id="fig|511145.12.peg.3374"/>
<dbReference type="EchoBASE" id="EB2688"/>
<dbReference type="eggNOG" id="ENOG50331AY">
    <property type="taxonomic scope" value="Bacteria"/>
</dbReference>
<dbReference type="HOGENOM" id="CLU_190004_1_0_6"/>
<dbReference type="InParanoid" id="P45795"/>
<dbReference type="OMA" id="MNQSIQF"/>
<dbReference type="OrthoDB" id="6465020at2"/>
<dbReference type="PhylomeDB" id="P45795"/>
<dbReference type="BioCyc" id="EcoCyc:G7697-MONOMER"/>
<dbReference type="PRO" id="PR:P45795"/>
<dbReference type="Proteomes" id="UP000000625">
    <property type="component" value="Chromosome"/>
</dbReference>
<dbReference type="Gene3D" id="3.30.160.140">
    <property type="entry name" value="Shew3726-like"/>
    <property type="match status" value="1"/>
</dbReference>
<dbReference type="InterPro" id="IPR009962">
    <property type="entry name" value="DUF1488"/>
</dbReference>
<dbReference type="InterPro" id="IPR036692">
    <property type="entry name" value="Shew3726-like_sf"/>
</dbReference>
<dbReference type="Pfam" id="PF07369">
    <property type="entry name" value="DUF1488"/>
    <property type="match status" value="1"/>
</dbReference>
<dbReference type="SUPFAM" id="SSF160272">
    <property type="entry name" value="Shew3726-like"/>
    <property type="match status" value="1"/>
</dbReference>
<gene>
    <name type="primary">yrdB</name>
    <name type="ordered locus">b3280</name>
    <name type="ordered locus">JW3241</name>
</gene>
<keyword id="KW-1185">Reference proteome</keyword>
<accession>P45795</accession>
<accession>Q2M6U5</accession>
<protein>
    <recommendedName>
        <fullName>Uncharacterized protein YrdB</fullName>
    </recommendedName>
</protein>